<proteinExistence type="inferred from homology"/>
<feature type="chain" id="PRO_1000082397" description="Co-chaperonin GroES">
    <location>
        <begin position="1"/>
        <end position="94"/>
    </location>
</feature>
<name>CH10_STAA9</name>
<organism>
    <name type="scientific">Staphylococcus aureus (strain JH9)</name>
    <dbReference type="NCBI Taxonomy" id="359786"/>
    <lineage>
        <taxon>Bacteria</taxon>
        <taxon>Bacillati</taxon>
        <taxon>Bacillota</taxon>
        <taxon>Bacilli</taxon>
        <taxon>Bacillales</taxon>
        <taxon>Staphylococcaceae</taxon>
        <taxon>Staphylococcus</taxon>
    </lineage>
</organism>
<protein>
    <recommendedName>
        <fullName evidence="1">Co-chaperonin GroES</fullName>
    </recommendedName>
    <alternativeName>
        <fullName evidence="1">10 kDa chaperonin</fullName>
    </alternativeName>
    <alternativeName>
        <fullName evidence="1">Chaperonin-10</fullName>
        <shortName evidence="1">Cpn10</shortName>
    </alternativeName>
</protein>
<keyword id="KW-0143">Chaperone</keyword>
<keyword id="KW-0963">Cytoplasm</keyword>
<comment type="function">
    <text evidence="1">Together with the chaperonin GroEL, plays an essential role in assisting protein folding. The GroEL-GroES system forms a nano-cage that allows encapsulation of the non-native substrate proteins and provides a physical environment optimized to promote and accelerate protein folding. GroES binds to the apical surface of the GroEL ring, thereby capping the opening of the GroEL channel.</text>
</comment>
<comment type="subunit">
    <text evidence="1">Heptamer of 7 subunits arranged in a ring. Interacts with the chaperonin GroEL.</text>
</comment>
<comment type="subcellular location">
    <subcellularLocation>
        <location evidence="1">Cytoplasm</location>
    </subcellularLocation>
</comment>
<comment type="similarity">
    <text evidence="1">Belongs to the GroES chaperonin family.</text>
</comment>
<gene>
    <name evidence="1" type="primary">groES</name>
    <name evidence="1" type="synonym">groS</name>
    <name type="ordered locus">SaurJH9_2067</name>
</gene>
<sequence>MLKPIGNRVIIEKKEQEQTTKSGIVLTDSAKEKSNEGVIVAVGTGRLLNDGTRVTPEVKEGDRVVFQQYAGTEVKRDNETYLVLNEEDILAVIE</sequence>
<dbReference type="EMBL" id="CP000703">
    <property type="protein sequence ID" value="ABQ49850.1"/>
    <property type="molecule type" value="Genomic_DNA"/>
</dbReference>
<dbReference type="RefSeq" id="WP_000917289.1">
    <property type="nucleotide sequence ID" value="NC_009487.1"/>
</dbReference>
<dbReference type="SMR" id="A5IUH7"/>
<dbReference type="GeneID" id="98346332"/>
<dbReference type="KEGG" id="saj:SaurJH9_2067"/>
<dbReference type="HOGENOM" id="CLU_132825_2_1_9"/>
<dbReference type="GO" id="GO:0005737">
    <property type="term" value="C:cytoplasm"/>
    <property type="evidence" value="ECO:0007669"/>
    <property type="project" value="UniProtKB-SubCell"/>
</dbReference>
<dbReference type="GO" id="GO:0005524">
    <property type="term" value="F:ATP binding"/>
    <property type="evidence" value="ECO:0007669"/>
    <property type="project" value="InterPro"/>
</dbReference>
<dbReference type="GO" id="GO:0046872">
    <property type="term" value="F:metal ion binding"/>
    <property type="evidence" value="ECO:0007669"/>
    <property type="project" value="TreeGrafter"/>
</dbReference>
<dbReference type="GO" id="GO:0044183">
    <property type="term" value="F:protein folding chaperone"/>
    <property type="evidence" value="ECO:0007669"/>
    <property type="project" value="InterPro"/>
</dbReference>
<dbReference type="GO" id="GO:0051087">
    <property type="term" value="F:protein-folding chaperone binding"/>
    <property type="evidence" value="ECO:0007669"/>
    <property type="project" value="TreeGrafter"/>
</dbReference>
<dbReference type="GO" id="GO:0051082">
    <property type="term" value="F:unfolded protein binding"/>
    <property type="evidence" value="ECO:0007669"/>
    <property type="project" value="TreeGrafter"/>
</dbReference>
<dbReference type="GO" id="GO:0051085">
    <property type="term" value="P:chaperone cofactor-dependent protein refolding"/>
    <property type="evidence" value="ECO:0007669"/>
    <property type="project" value="TreeGrafter"/>
</dbReference>
<dbReference type="CDD" id="cd00320">
    <property type="entry name" value="cpn10"/>
    <property type="match status" value="1"/>
</dbReference>
<dbReference type="FunFam" id="2.30.33.40:FF:000001">
    <property type="entry name" value="10 kDa chaperonin"/>
    <property type="match status" value="1"/>
</dbReference>
<dbReference type="Gene3D" id="2.30.33.40">
    <property type="entry name" value="GroES chaperonin"/>
    <property type="match status" value="1"/>
</dbReference>
<dbReference type="HAMAP" id="MF_00580">
    <property type="entry name" value="CH10"/>
    <property type="match status" value="1"/>
</dbReference>
<dbReference type="InterPro" id="IPR020818">
    <property type="entry name" value="Chaperonin_GroES"/>
</dbReference>
<dbReference type="InterPro" id="IPR037124">
    <property type="entry name" value="Chaperonin_GroES_sf"/>
</dbReference>
<dbReference type="InterPro" id="IPR018369">
    <property type="entry name" value="Chaprnonin_Cpn10_CS"/>
</dbReference>
<dbReference type="InterPro" id="IPR011032">
    <property type="entry name" value="GroES-like_sf"/>
</dbReference>
<dbReference type="NCBIfam" id="NF001531">
    <property type="entry name" value="PRK00364.2-2"/>
    <property type="match status" value="1"/>
</dbReference>
<dbReference type="NCBIfam" id="NF001532">
    <property type="entry name" value="PRK00364.2-3"/>
    <property type="match status" value="1"/>
</dbReference>
<dbReference type="NCBIfam" id="NF001533">
    <property type="entry name" value="PRK00364.2-4"/>
    <property type="match status" value="1"/>
</dbReference>
<dbReference type="NCBIfam" id="NF001534">
    <property type="entry name" value="PRK00364.2-5"/>
    <property type="match status" value="1"/>
</dbReference>
<dbReference type="PANTHER" id="PTHR10772">
    <property type="entry name" value="10 KDA HEAT SHOCK PROTEIN"/>
    <property type="match status" value="1"/>
</dbReference>
<dbReference type="PANTHER" id="PTHR10772:SF58">
    <property type="entry name" value="CO-CHAPERONIN GROES"/>
    <property type="match status" value="1"/>
</dbReference>
<dbReference type="Pfam" id="PF00166">
    <property type="entry name" value="Cpn10"/>
    <property type="match status" value="1"/>
</dbReference>
<dbReference type="PRINTS" id="PR00297">
    <property type="entry name" value="CHAPERONIN10"/>
</dbReference>
<dbReference type="SMART" id="SM00883">
    <property type="entry name" value="Cpn10"/>
    <property type="match status" value="1"/>
</dbReference>
<dbReference type="SUPFAM" id="SSF50129">
    <property type="entry name" value="GroES-like"/>
    <property type="match status" value="1"/>
</dbReference>
<dbReference type="PROSITE" id="PS00681">
    <property type="entry name" value="CHAPERONINS_CPN10"/>
    <property type="match status" value="1"/>
</dbReference>
<accession>A5IUH7</accession>
<reference key="1">
    <citation type="submission" date="2007-05" db="EMBL/GenBank/DDBJ databases">
        <title>Complete sequence of chromosome of Staphylococcus aureus subsp. aureus JH9.</title>
        <authorList>
            <consortium name="US DOE Joint Genome Institute"/>
            <person name="Copeland A."/>
            <person name="Lucas S."/>
            <person name="Lapidus A."/>
            <person name="Barry K."/>
            <person name="Detter J.C."/>
            <person name="Glavina del Rio T."/>
            <person name="Hammon N."/>
            <person name="Israni S."/>
            <person name="Pitluck S."/>
            <person name="Chain P."/>
            <person name="Malfatti S."/>
            <person name="Shin M."/>
            <person name="Vergez L."/>
            <person name="Schmutz J."/>
            <person name="Larimer F."/>
            <person name="Land M."/>
            <person name="Hauser L."/>
            <person name="Kyrpides N."/>
            <person name="Kim E."/>
            <person name="Tomasz A."/>
            <person name="Richardson P."/>
        </authorList>
    </citation>
    <scope>NUCLEOTIDE SEQUENCE [LARGE SCALE GENOMIC DNA]</scope>
    <source>
        <strain>JH9</strain>
    </source>
</reference>
<evidence type="ECO:0000255" key="1">
    <source>
        <dbReference type="HAMAP-Rule" id="MF_00580"/>
    </source>
</evidence>